<name>CBPM_ECOSM</name>
<reference key="1">
    <citation type="journal article" date="2008" name="J. Bacteriol.">
        <title>Insights into the environmental resistance gene pool from the genome sequence of the multidrug-resistant environmental isolate Escherichia coli SMS-3-5.</title>
        <authorList>
            <person name="Fricke W.F."/>
            <person name="Wright M.S."/>
            <person name="Lindell A.H."/>
            <person name="Harkins D.M."/>
            <person name="Baker-Austin C."/>
            <person name="Ravel J."/>
            <person name="Stepanauskas R."/>
        </authorList>
    </citation>
    <scope>NUCLEOTIDE SEQUENCE [LARGE SCALE GENOMIC DNA]</scope>
    <source>
        <strain>SMS-3-5 / SECEC</strain>
    </source>
</reference>
<feature type="chain" id="PRO_1000137773" description="Chaperone modulatory protein CbpM">
    <location>
        <begin position="1"/>
        <end position="101"/>
    </location>
</feature>
<protein>
    <recommendedName>
        <fullName evidence="1">Chaperone modulatory protein CbpM</fullName>
    </recommendedName>
</protein>
<proteinExistence type="inferred from homology"/>
<organism>
    <name type="scientific">Escherichia coli (strain SMS-3-5 / SECEC)</name>
    <dbReference type="NCBI Taxonomy" id="439855"/>
    <lineage>
        <taxon>Bacteria</taxon>
        <taxon>Pseudomonadati</taxon>
        <taxon>Pseudomonadota</taxon>
        <taxon>Gammaproteobacteria</taxon>
        <taxon>Enterobacterales</taxon>
        <taxon>Enterobacteriaceae</taxon>
        <taxon>Escherichia</taxon>
    </lineage>
</organism>
<dbReference type="EMBL" id="CP000970">
    <property type="protein sequence ID" value="ACB18640.1"/>
    <property type="molecule type" value="Genomic_DNA"/>
</dbReference>
<dbReference type="RefSeq" id="WP_000024560.1">
    <property type="nucleotide sequence ID" value="NC_010498.1"/>
</dbReference>
<dbReference type="SMR" id="B1LJ05"/>
<dbReference type="GeneID" id="93776412"/>
<dbReference type="KEGG" id="ecm:EcSMS35_2125"/>
<dbReference type="HOGENOM" id="CLU_144710_3_1_6"/>
<dbReference type="Proteomes" id="UP000007011">
    <property type="component" value="Chromosome"/>
</dbReference>
<dbReference type="FunFam" id="1.10.1660.10:FF:000006">
    <property type="entry name" value="Chaperone modulatory protein CbpM"/>
    <property type="match status" value="1"/>
</dbReference>
<dbReference type="Gene3D" id="1.10.1660.10">
    <property type="match status" value="1"/>
</dbReference>
<dbReference type="HAMAP" id="MF_01155">
    <property type="entry name" value="CbpM"/>
    <property type="match status" value="1"/>
</dbReference>
<dbReference type="InterPro" id="IPR022835">
    <property type="entry name" value="CbpM"/>
</dbReference>
<dbReference type="NCBIfam" id="NF007617">
    <property type="entry name" value="PRK10265.1"/>
    <property type="match status" value="1"/>
</dbReference>
<dbReference type="Pfam" id="PF13591">
    <property type="entry name" value="MerR_2"/>
    <property type="match status" value="1"/>
</dbReference>
<comment type="function">
    <text evidence="1">Interacts with CbpA and inhibits both the DnaJ-like co-chaperone activity and the DNA binding activity of CbpA. Together with CbpA, modulates the activity of the DnaK chaperone system. Does not inhibit the co-chaperone activity of DnaJ.</text>
</comment>
<comment type="similarity">
    <text evidence="1">Belongs to the CbpM family.</text>
</comment>
<sequence>MANVTVTFTITEFCLHTGISEEELNEIVGLGVVEPREIQETTWVFDDHAAIVVQRAVRLRHELALDWPGIAVALTLMDDIAHLKQENRLLRQRLSRFVAHP</sequence>
<gene>
    <name evidence="1" type="primary">cbpM</name>
    <name type="ordered locus">EcSMS35_2125</name>
</gene>
<evidence type="ECO:0000255" key="1">
    <source>
        <dbReference type="HAMAP-Rule" id="MF_01155"/>
    </source>
</evidence>
<accession>B1LJ05</accession>